<sequence>MTTNYIFVTGGVVSSLGKGIAAASLAAILEARGLNVTIMKLDPYINVDPGTMSPIQHGEVFVTEDGAETDLDLGHYERFIRTKMSRRNNFTTGRIYSDVLRKERRGDYLGATVQVIPHITNAIKERVLEGGEGHDVVLVEIGGTVGDIESLPFLEAIRQMAVEIGREHTLFMHLTLVPYMAASGEVKTKPTQHSVKELLSIGIQPDILICRSDRAVPANERAKIALFCNVPEKAVISLKDVDSIYKIPGLLKSQGLDDYICKRFSLNCPEANLSEWEQVIFEEANPVSEVTIGMVGKYIELPDAYKSVIEALKHGGLKNRVSVNIKLIDSQDVETRGVEILKGLDAILVPGGFGYRGVEGMITTARFARENNIPYLGICLGMQVALIDYARHVANMENANSTEFVPDCKYPVVALITEWRDENGNVEVRSEKSDLGGTMRLGAQQCQLVDDSLVRQLYNAPTIVERHRHRYEVNNMLLKQIEDAGLRVAGRSGDDQLVEIIEVPNHPWFVACQFHPEFTSTPRDGHPLFAGFVKAASEFQKRQAK</sequence>
<feature type="chain" id="PRO_0000266219" description="CTP synthase">
    <location>
        <begin position="1"/>
        <end position="545"/>
    </location>
</feature>
<feature type="domain" description="Glutamine amidotransferase type-1" evidence="1">
    <location>
        <begin position="291"/>
        <end position="542"/>
    </location>
</feature>
<feature type="region of interest" description="Amidoligase domain" evidence="1">
    <location>
        <begin position="1"/>
        <end position="266"/>
    </location>
</feature>
<feature type="active site" description="Nucleophile; for glutamine hydrolysis" evidence="1">
    <location>
        <position position="379"/>
    </location>
</feature>
<feature type="active site" evidence="1">
    <location>
        <position position="515"/>
    </location>
</feature>
<feature type="active site" evidence="1">
    <location>
        <position position="517"/>
    </location>
</feature>
<feature type="binding site" evidence="1">
    <location>
        <position position="14"/>
    </location>
    <ligand>
        <name>CTP</name>
        <dbReference type="ChEBI" id="CHEBI:37563"/>
        <note>allosteric inhibitor</note>
    </ligand>
</feature>
<feature type="binding site" evidence="1">
    <location>
        <position position="14"/>
    </location>
    <ligand>
        <name>UTP</name>
        <dbReference type="ChEBI" id="CHEBI:46398"/>
    </ligand>
</feature>
<feature type="binding site" evidence="1">
    <location>
        <begin position="15"/>
        <end position="20"/>
    </location>
    <ligand>
        <name>ATP</name>
        <dbReference type="ChEBI" id="CHEBI:30616"/>
    </ligand>
</feature>
<feature type="binding site" evidence="1">
    <location>
        <position position="72"/>
    </location>
    <ligand>
        <name>ATP</name>
        <dbReference type="ChEBI" id="CHEBI:30616"/>
    </ligand>
</feature>
<feature type="binding site" evidence="1">
    <location>
        <position position="72"/>
    </location>
    <ligand>
        <name>Mg(2+)</name>
        <dbReference type="ChEBI" id="CHEBI:18420"/>
    </ligand>
</feature>
<feature type="binding site" evidence="1">
    <location>
        <position position="140"/>
    </location>
    <ligand>
        <name>Mg(2+)</name>
        <dbReference type="ChEBI" id="CHEBI:18420"/>
    </ligand>
</feature>
<feature type="binding site" evidence="1">
    <location>
        <begin position="147"/>
        <end position="149"/>
    </location>
    <ligand>
        <name>CTP</name>
        <dbReference type="ChEBI" id="CHEBI:37563"/>
        <note>allosteric inhibitor</note>
    </ligand>
</feature>
<feature type="binding site" evidence="1">
    <location>
        <begin position="187"/>
        <end position="192"/>
    </location>
    <ligand>
        <name>CTP</name>
        <dbReference type="ChEBI" id="CHEBI:37563"/>
        <note>allosteric inhibitor</note>
    </ligand>
</feature>
<feature type="binding site" evidence="1">
    <location>
        <begin position="187"/>
        <end position="192"/>
    </location>
    <ligand>
        <name>UTP</name>
        <dbReference type="ChEBI" id="CHEBI:46398"/>
    </ligand>
</feature>
<feature type="binding site" evidence="1">
    <location>
        <position position="223"/>
    </location>
    <ligand>
        <name>CTP</name>
        <dbReference type="ChEBI" id="CHEBI:37563"/>
        <note>allosteric inhibitor</note>
    </ligand>
</feature>
<feature type="binding site" evidence="1">
    <location>
        <position position="223"/>
    </location>
    <ligand>
        <name>UTP</name>
        <dbReference type="ChEBI" id="CHEBI:46398"/>
    </ligand>
</feature>
<feature type="binding site" evidence="1">
    <location>
        <begin position="239"/>
        <end position="241"/>
    </location>
    <ligand>
        <name>ATP</name>
        <dbReference type="ChEBI" id="CHEBI:30616"/>
    </ligand>
</feature>
<feature type="binding site" evidence="1">
    <location>
        <position position="352"/>
    </location>
    <ligand>
        <name>L-glutamine</name>
        <dbReference type="ChEBI" id="CHEBI:58359"/>
    </ligand>
</feature>
<feature type="binding site" evidence="1">
    <location>
        <begin position="380"/>
        <end position="383"/>
    </location>
    <ligand>
        <name>L-glutamine</name>
        <dbReference type="ChEBI" id="CHEBI:58359"/>
    </ligand>
</feature>
<feature type="binding site" evidence="1">
    <location>
        <position position="403"/>
    </location>
    <ligand>
        <name>L-glutamine</name>
        <dbReference type="ChEBI" id="CHEBI:58359"/>
    </ligand>
</feature>
<feature type="binding site" evidence="1">
    <location>
        <position position="470"/>
    </location>
    <ligand>
        <name>L-glutamine</name>
        <dbReference type="ChEBI" id="CHEBI:58359"/>
    </ligand>
</feature>
<organism>
    <name type="scientific">Shigella sonnei (strain Ss046)</name>
    <dbReference type="NCBI Taxonomy" id="300269"/>
    <lineage>
        <taxon>Bacteria</taxon>
        <taxon>Pseudomonadati</taxon>
        <taxon>Pseudomonadota</taxon>
        <taxon>Gammaproteobacteria</taxon>
        <taxon>Enterobacterales</taxon>
        <taxon>Enterobacteriaceae</taxon>
        <taxon>Shigella</taxon>
    </lineage>
</organism>
<keyword id="KW-0067">ATP-binding</keyword>
<keyword id="KW-0315">Glutamine amidotransferase</keyword>
<keyword id="KW-0436">Ligase</keyword>
<keyword id="KW-0460">Magnesium</keyword>
<keyword id="KW-0479">Metal-binding</keyword>
<keyword id="KW-0547">Nucleotide-binding</keyword>
<keyword id="KW-0665">Pyrimidine biosynthesis</keyword>
<keyword id="KW-1185">Reference proteome</keyword>
<dbReference type="EC" id="6.3.4.2" evidence="1"/>
<dbReference type="EMBL" id="CP000038">
    <property type="protein sequence ID" value="AAZ89536.1"/>
    <property type="molecule type" value="Genomic_DNA"/>
</dbReference>
<dbReference type="RefSeq" id="WP_000210878.1">
    <property type="nucleotide sequence ID" value="NC_007384.1"/>
</dbReference>
<dbReference type="SMR" id="Q3YY76"/>
<dbReference type="MEROPS" id="C26.964"/>
<dbReference type="GeneID" id="93779218"/>
<dbReference type="KEGG" id="ssn:SSON_2937"/>
<dbReference type="HOGENOM" id="CLU_011675_5_0_6"/>
<dbReference type="UniPathway" id="UPA00159">
    <property type="reaction ID" value="UER00277"/>
</dbReference>
<dbReference type="Proteomes" id="UP000002529">
    <property type="component" value="Chromosome"/>
</dbReference>
<dbReference type="GO" id="GO:0005829">
    <property type="term" value="C:cytosol"/>
    <property type="evidence" value="ECO:0007669"/>
    <property type="project" value="TreeGrafter"/>
</dbReference>
<dbReference type="GO" id="GO:0005524">
    <property type="term" value="F:ATP binding"/>
    <property type="evidence" value="ECO:0007669"/>
    <property type="project" value="UniProtKB-KW"/>
</dbReference>
<dbReference type="GO" id="GO:0003883">
    <property type="term" value="F:CTP synthase activity"/>
    <property type="evidence" value="ECO:0007669"/>
    <property type="project" value="UniProtKB-UniRule"/>
</dbReference>
<dbReference type="GO" id="GO:0004359">
    <property type="term" value="F:glutaminase activity"/>
    <property type="evidence" value="ECO:0007669"/>
    <property type="project" value="RHEA"/>
</dbReference>
<dbReference type="GO" id="GO:0042802">
    <property type="term" value="F:identical protein binding"/>
    <property type="evidence" value="ECO:0007669"/>
    <property type="project" value="TreeGrafter"/>
</dbReference>
<dbReference type="GO" id="GO:0046872">
    <property type="term" value="F:metal ion binding"/>
    <property type="evidence" value="ECO:0007669"/>
    <property type="project" value="UniProtKB-KW"/>
</dbReference>
<dbReference type="GO" id="GO:0044210">
    <property type="term" value="P:'de novo' CTP biosynthetic process"/>
    <property type="evidence" value="ECO:0007669"/>
    <property type="project" value="UniProtKB-UniRule"/>
</dbReference>
<dbReference type="GO" id="GO:0019856">
    <property type="term" value="P:pyrimidine nucleobase biosynthetic process"/>
    <property type="evidence" value="ECO:0007669"/>
    <property type="project" value="TreeGrafter"/>
</dbReference>
<dbReference type="CDD" id="cd03113">
    <property type="entry name" value="CTPS_N"/>
    <property type="match status" value="1"/>
</dbReference>
<dbReference type="CDD" id="cd01746">
    <property type="entry name" value="GATase1_CTP_Synthase"/>
    <property type="match status" value="1"/>
</dbReference>
<dbReference type="FunFam" id="3.40.50.300:FF:000009">
    <property type="entry name" value="CTP synthase"/>
    <property type="match status" value="1"/>
</dbReference>
<dbReference type="FunFam" id="3.40.50.880:FF:000002">
    <property type="entry name" value="CTP synthase"/>
    <property type="match status" value="1"/>
</dbReference>
<dbReference type="Gene3D" id="3.40.50.880">
    <property type="match status" value="1"/>
</dbReference>
<dbReference type="Gene3D" id="3.40.50.300">
    <property type="entry name" value="P-loop containing nucleotide triphosphate hydrolases"/>
    <property type="match status" value="1"/>
</dbReference>
<dbReference type="HAMAP" id="MF_01227">
    <property type="entry name" value="PyrG"/>
    <property type="match status" value="1"/>
</dbReference>
<dbReference type="InterPro" id="IPR029062">
    <property type="entry name" value="Class_I_gatase-like"/>
</dbReference>
<dbReference type="InterPro" id="IPR004468">
    <property type="entry name" value="CTP_synthase"/>
</dbReference>
<dbReference type="InterPro" id="IPR017456">
    <property type="entry name" value="CTP_synthase_N"/>
</dbReference>
<dbReference type="InterPro" id="IPR017926">
    <property type="entry name" value="GATASE"/>
</dbReference>
<dbReference type="InterPro" id="IPR033828">
    <property type="entry name" value="GATase1_CTP_Synthase"/>
</dbReference>
<dbReference type="InterPro" id="IPR027417">
    <property type="entry name" value="P-loop_NTPase"/>
</dbReference>
<dbReference type="NCBIfam" id="NF003792">
    <property type="entry name" value="PRK05380.1"/>
    <property type="match status" value="1"/>
</dbReference>
<dbReference type="NCBIfam" id="TIGR00337">
    <property type="entry name" value="PyrG"/>
    <property type="match status" value="1"/>
</dbReference>
<dbReference type="PANTHER" id="PTHR11550">
    <property type="entry name" value="CTP SYNTHASE"/>
    <property type="match status" value="1"/>
</dbReference>
<dbReference type="PANTHER" id="PTHR11550:SF0">
    <property type="entry name" value="CTP SYNTHASE-RELATED"/>
    <property type="match status" value="1"/>
</dbReference>
<dbReference type="Pfam" id="PF06418">
    <property type="entry name" value="CTP_synth_N"/>
    <property type="match status" value="1"/>
</dbReference>
<dbReference type="Pfam" id="PF00117">
    <property type="entry name" value="GATase"/>
    <property type="match status" value="1"/>
</dbReference>
<dbReference type="SUPFAM" id="SSF52317">
    <property type="entry name" value="Class I glutamine amidotransferase-like"/>
    <property type="match status" value="1"/>
</dbReference>
<dbReference type="SUPFAM" id="SSF52540">
    <property type="entry name" value="P-loop containing nucleoside triphosphate hydrolases"/>
    <property type="match status" value="1"/>
</dbReference>
<dbReference type="PROSITE" id="PS51273">
    <property type="entry name" value="GATASE_TYPE_1"/>
    <property type="match status" value="1"/>
</dbReference>
<accession>Q3YY76</accession>
<evidence type="ECO:0000255" key="1">
    <source>
        <dbReference type="HAMAP-Rule" id="MF_01227"/>
    </source>
</evidence>
<reference key="1">
    <citation type="journal article" date="2005" name="Nucleic Acids Res.">
        <title>Genome dynamics and diversity of Shigella species, the etiologic agents of bacillary dysentery.</title>
        <authorList>
            <person name="Yang F."/>
            <person name="Yang J."/>
            <person name="Zhang X."/>
            <person name="Chen L."/>
            <person name="Jiang Y."/>
            <person name="Yan Y."/>
            <person name="Tang X."/>
            <person name="Wang J."/>
            <person name="Xiong Z."/>
            <person name="Dong J."/>
            <person name="Xue Y."/>
            <person name="Zhu Y."/>
            <person name="Xu X."/>
            <person name="Sun L."/>
            <person name="Chen S."/>
            <person name="Nie H."/>
            <person name="Peng J."/>
            <person name="Xu J."/>
            <person name="Wang Y."/>
            <person name="Yuan Z."/>
            <person name="Wen Y."/>
            <person name="Yao Z."/>
            <person name="Shen Y."/>
            <person name="Qiang B."/>
            <person name="Hou Y."/>
            <person name="Yu J."/>
            <person name="Jin Q."/>
        </authorList>
    </citation>
    <scope>NUCLEOTIDE SEQUENCE [LARGE SCALE GENOMIC DNA]</scope>
    <source>
        <strain>Ss046</strain>
    </source>
</reference>
<protein>
    <recommendedName>
        <fullName evidence="1">CTP synthase</fullName>
        <ecNumber evidence="1">6.3.4.2</ecNumber>
    </recommendedName>
    <alternativeName>
        <fullName evidence="1">Cytidine 5'-triphosphate synthase</fullName>
    </alternativeName>
    <alternativeName>
        <fullName evidence="1">Cytidine triphosphate synthetase</fullName>
        <shortName evidence="1">CTP synthetase</shortName>
        <shortName evidence="1">CTPS</shortName>
    </alternativeName>
    <alternativeName>
        <fullName evidence="1">UTP--ammonia ligase</fullName>
    </alternativeName>
</protein>
<gene>
    <name evidence="1" type="primary">pyrG</name>
    <name type="ordered locus">SSON_2937</name>
</gene>
<proteinExistence type="inferred from homology"/>
<name>PYRG_SHISS</name>
<comment type="function">
    <text evidence="1">Catalyzes the ATP-dependent amination of UTP to CTP with either L-glutamine or ammonia as the source of nitrogen. Regulates intracellular CTP levels through interactions with the four ribonucleotide triphosphates.</text>
</comment>
<comment type="catalytic activity">
    <reaction evidence="1">
        <text>UTP + L-glutamine + ATP + H2O = CTP + L-glutamate + ADP + phosphate + 2 H(+)</text>
        <dbReference type="Rhea" id="RHEA:26426"/>
        <dbReference type="ChEBI" id="CHEBI:15377"/>
        <dbReference type="ChEBI" id="CHEBI:15378"/>
        <dbReference type="ChEBI" id="CHEBI:29985"/>
        <dbReference type="ChEBI" id="CHEBI:30616"/>
        <dbReference type="ChEBI" id="CHEBI:37563"/>
        <dbReference type="ChEBI" id="CHEBI:43474"/>
        <dbReference type="ChEBI" id="CHEBI:46398"/>
        <dbReference type="ChEBI" id="CHEBI:58359"/>
        <dbReference type="ChEBI" id="CHEBI:456216"/>
        <dbReference type="EC" id="6.3.4.2"/>
    </reaction>
</comment>
<comment type="catalytic activity">
    <reaction evidence="1">
        <text>L-glutamine + H2O = L-glutamate + NH4(+)</text>
        <dbReference type="Rhea" id="RHEA:15889"/>
        <dbReference type="ChEBI" id="CHEBI:15377"/>
        <dbReference type="ChEBI" id="CHEBI:28938"/>
        <dbReference type="ChEBI" id="CHEBI:29985"/>
        <dbReference type="ChEBI" id="CHEBI:58359"/>
    </reaction>
</comment>
<comment type="catalytic activity">
    <reaction evidence="1">
        <text>UTP + NH4(+) + ATP = CTP + ADP + phosphate + 2 H(+)</text>
        <dbReference type="Rhea" id="RHEA:16597"/>
        <dbReference type="ChEBI" id="CHEBI:15378"/>
        <dbReference type="ChEBI" id="CHEBI:28938"/>
        <dbReference type="ChEBI" id="CHEBI:30616"/>
        <dbReference type="ChEBI" id="CHEBI:37563"/>
        <dbReference type="ChEBI" id="CHEBI:43474"/>
        <dbReference type="ChEBI" id="CHEBI:46398"/>
        <dbReference type="ChEBI" id="CHEBI:456216"/>
    </reaction>
</comment>
<comment type="activity regulation">
    <text evidence="1">Allosterically activated by GTP, when glutamine is the substrate; GTP has no effect on the reaction when ammonia is the substrate. The allosteric effector GTP functions by stabilizing the protein conformation that binds the tetrahedral intermediate(s) formed during glutamine hydrolysis. Inhibited by the product CTP, via allosteric rather than competitive inhibition.</text>
</comment>
<comment type="pathway">
    <text evidence="1">Pyrimidine metabolism; CTP biosynthesis via de novo pathway; CTP from UDP: step 2/2.</text>
</comment>
<comment type="subunit">
    <text evidence="1">Homotetramer.</text>
</comment>
<comment type="miscellaneous">
    <text evidence="1">CTPSs have evolved a hybrid strategy for distinguishing between UTP and CTP. The overlapping regions of the product feedback inhibitory and substrate sites recognize a common feature in both compounds, the triphosphate moiety. To differentiate isosteric substrate and product pyrimidine rings, an additional pocket far from the expected kinase/ligase catalytic site, specifically recognizes the cytosine and ribose portions of the product inhibitor.</text>
</comment>
<comment type="similarity">
    <text evidence="1">Belongs to the CTP synthase family.</text>
</comment>